<evidence type="ECO:0000255" key="1">
    <source>
        <dbReference type="HAMAP-Rule" id="MF_00158"/>
    </source>
</evidence>
<feature type="chain" id="PRO_1000123424" description="Pantothenate synthetase">
    <location>
        <begin position="1"/>
        <end position="286"/>
    </location>
</feature>
<feature type="active site" description="Proton donor" evidence="1">
    <location>
        <position position="37"/>
    </location>
</feature>
<feature type="binding site" evidence="1">
    <location>
        <begin position="30"/>
        <end position="37"/>
    </location>
    <ligand>
        <name>ATP</name>
        <dbReference type="ChEBI" id="CHEBI:30616"/>
    </ligand>
</feature>
<feature type="binding site" evidence="1">
    <location>
        <position position="61"/>
    </location>
    <ligand>
        <name>(R)-pantoate</name>
        <dbReference type="ChEBI" id="CHEBI:15980"/>
    </ligand>
</feature>
<feature type="binding site" evidence="1">
    <location>
        <position position="61"/>
    </location>
    <ligand>
        <name>beta-alanine</name>
        <dbReference type="ChEBI" id="CHEBI:57966"/>
    </ligand>
</feature>
<feature type="binding site" evidence="1">
    <location>
        <begin position="149"/>
        <end position="152"/>
    </location>
    <ligand>
        <name>ATP</name>
        <dbReference type="ChEBI" id="CHEBI:30616"/>
    </ligand>
</feature>
<feature type="binding site" evidence="1">
    <location>
        <position position="155"/>
    </location>
    <ligand>
        <name>(R)-pantoate</name>
        <dbReference type="ChEBI" id="CHEBI:15980"/>
    </ligand>
</feature>
<feature type="binding site" evidence="1">
    <location>
        <position position="178"/>
    </location>
    <ligand>
        <name>ATP</name>
        <dbReference type="ChEBI" id="CHEBI:30616"/>
    </ligand>
</feature>
<feature type="binding site" evidence="1">
    <location>
        <begin position="186"/>
        <end position="189"/>
    </location>
    <ligand>
        <name>ATP</name>
        <dbReference type="ChEBI" id="CHEBI:30616"/>
    </ligand>
</feature>
<reference key="1">
    <citation type="journal article" date="2011" name="Stand. Genomic Sci.">
        <title>Complete genome sequence of 'Thioalkalivibrio sulfidophilus' HL-EbGr7.</title>
        <authorList>
            <person name="Muyzer G."/>
            <person name="Sorokin D.Y."/>
            <person name="Mavromatis K."/>
            <person name="Lapidus A."/>
            <person name="Clum A."/>
            <person name="Ivanova N."/>
            <person name="Pati A."/>
            <person name="d'Haeseleer P."/>
            <person name="Woyke T."/>
            <person name="Kyrpides N.C."/>
        </authorList>
    </citation>
    <scope>NUCLEOTIDE SEQUENCE [LARGE SCALE GENOMIC DNA]</scope>
    <source>
        <strain>HL-EbGR7</strain>
    </source>
</reference>
<protein>
    <recommendedName>
        <fullName evidence="1">Pantothenate synthetase</fullName>
        <shortName evidence="1">PS</shortName>
        <ecNumber evidence="1">6.3.2.1</ecNumber>
    </recommendedName>
    <alternativeName>
        <fullName evidence="1">Pantoate--beta-alanine ligase</fullName>
    </alternativeName>
    <alternativeName>
        <fullName evidence="1">Pantoate-activating enzyme</fullName>
    </alternativeName>
</protein>
<comment type="function">
    <text evidence="1">Catalyzes the condensation of pantoate with beta-alanine in an ATP-dependent reaction via a pantoyl-adenylate intermediate.</text>
</comment>
<comment type="catalytic activity">
    <reaction evidence="1">
        <text>(R)-pantoate + beta-alanine + ATP = (R)-pantothenate + AMP + diphosphate + H(+)</text>
        <dbReference type="Rhea" id="RHEA:10912"/>
        <dbReference type="ChEBI" id="CHEBI:15378"/>
        <dbReference type="ChEBI" id="CHEBI:15980"/>
        <dbReference type="ChEBI" id="CHEBI:29032"/>
        <dbReference type="ChEBI" id="CHEBI:30616"/>
        <dbReference type="ChEBI" id="CHEBI:33019"/>
        <dbReference type="ChEBI" id="CHEBI:57966"/>
        <dbReference type="ChEBI" id="CHEBI:456215"/>
        <dbReference type="EC" id="6.3.2.1"/>
    </reaction>
</comment>
<comment type="pathway">
    <text evidence="1">Cofactor biosynthesis; (R)-pantothenate biosynthesis; (R)-pantothenate from (R)-pantoate and beta-alanine: step 1/1.</text>
</comment>
<comment type="subunit">
    <text evidence="1">Homodimer.</text>
</comment>
<comment type="subcellular location">
    <subcellularLocation>
        <location evidence="1">Cytoplasm</location>
    </subcellularLocation>
</comment>
<comment type="miscellaneous">
    <text evidence="1">The reaction proceeds by a bi uni uni bi ping pong mechanism.</text>
</comment>
<comment type="similarity">
    <text evidence="1">Belongs to the pantothenate synthetase family.</text>
</comment>
<proteinExistence type="inferred from homology"/>
<accession>B8GNA8</accession>
<gene>
    <name evidence="1" type="primary">panC</name>
    <name type="ordered locus">Tgr7_0878</name>
</gene>
<name>PANC_THISH</name>
<sequence length="286" mass="30823">MQTVHTRAALAAALDPWRRAGERIALVPTMGNLHAGHLALVRRARAEADRVVATIFVNPLQFDRPEDLAAYPRTLEADAAALAGAGVDLLFAPAEQEVYPRGRDGVTRVEVPGLGDELEGAHRPGHFIGVATVVCKLFAMTRPDVAVFGEKDFQQLLIIRTMNADLDLGVRVLSEPTVREPDGLAMSSRNGYLGPEDRARAPALHAALRALAGALERGERDFPALEQAARSQIEAAGLRPEYVSLRRRQDLDLPGPGDRELVILAAAWCGPARLIDNLPVDLPPSG</sequence>
<organism>
    <name type="scientific">Thioalkalivibrio sulfidiphilus (strain HL-EbGR7)</name>
    <dbReference type="NCBI Taxonomy" id="396588"/>
    <lineage>
        <taxon>Bacteria</taxon>
        <taxon>Pseudomonadati</taxon>
        <taxon>Pseudomonadota</taxon>
        <taxon>Gammaproteobacteria</taxon>
        <taxon>Chromatiales</taxon>
        <taxon>Ectothiorhodospiraceae</taxon>
        <taxon>Thioalkalivibrio</taxon>
    </lineage>
</organism>
<dbReference type="EC" id="6.3.2.1" evidence="1"/>
<dbReference type="EMBL" id="CP001339">
    <property type="protein sequence ID" value="ACL71969.1"/>
    <property type="molecule type" value="Genomic_DNA"/>
</dbReference>
<dbReference type="RefSeq" id="WP_012637457.1">
    <property type="nucleotide sequence ID" value="NC_011901.1"/>
</dbReference>
<dbReference type="SMR" id="B8GNA8"/>
<dbReference type="STRING" id="396588.Tgr7_0878"/>
<dbReference type="KEGG" id="tgr:Tgr7_0878"/>
<dbReference type="eggNOG" id="COG0414">
    <property type="taxonomic scope" value="Bacteria"/>
</dbReference>
<dbReference type="HOGENOM" id="CLU_047148_0_0_6"/>
<dbReference type="OrthoDB" id="9773087at2"/>
<dbReference type="UniPathway" id="UPA00028">
    <property type="reaction ID" value="UER00005"/>
</dbReference>
<dbReference type="Proteomes" id="UP000002383">
    <property type="component" value="Chromosome"/>
</dbReference>
<dbReference type="GO" id="GO:0005829">
    <property type="term" value="C:cytosol"/>
    <property type="evidence" value="ECO:0007669"/>
    <property type="project" value="TreeGrafter"/>
</dbReference>
<dbReference type="GO" id="GO:0005524">
    <property type="term" value="F:ATP binding"/>
    <property type="evidence" value="ECO:0007669"/>
    <property type="project" value="UniProtKB-KW"/>
</dbReference>
<dbReference type="GO" id="GO:0004592">
    <property type="term" value="F:pantoate-beta-alanine ligase activity"/>
    <property type="evidence" value="ECO:0007669"/>
    <property type="project" value="UniProtKB-UniRule"/>
</dbReference>
<dbReference type="GO" id="GO:0015940">
    <property type="term" value="P:pantothenate biosynthetic process"/>
    <property type="evidence" value="ECO:0007669"/>
    <property type="project" value="UniProtKB-UniRule"/>
</dbReference>
<dbReference type="CDD" id="cd00560">
    <property type="entry name" value="PanC"/>
    <property type="match status" value="1"/>
</dbReference>
<dbReference type="FunFam" id="3.40.50.620:FF:000013">
    <property type="entry name" value="Pantothenate synthetase"/>
    <property type="match status" value="1"/>
</dbReference>
<dbReference type="Gene3D" id="3.40.50.620">
    <property type="entry name" value="HUPs"/>
    <property type="match status" value="1"/>
</dbReference>
<dbReference type="Gene3D" id="3.30.1300.10">
    <property type="entry name" value="Pantoate-beta-alanine ligase, C-terminal domain"/>
    <property type="match status" value="1"/>
</dbReference>
<dbReference type="HAMAP" id="MF_00158">
    <property type="entry name" value="PanC"/>
    <property type="match status" value="1"/>
</dbReference>
<dbReference type="InterPro" id="IPR004821">
    <property type="entry name" value="Cyt_trans-like"/>
</dbReference>
<dbReference type="InterPro" id="IPR003721">
    <property type="entry name" value="Pantoate_ligase"/>
</dbReference>
<dbReference type="InterPro" id="IPR042176">
    <property type="entry name" value="Pantoate_ligase_C"/>
</dbReference>
<dbReference type="InterPro" id="IPR014729">
    <property type="entry name" value="Rossmann-like_a/b/a_fold"/>
</dbReference>
<dbReference type="NCBIfam" id="TIGR00125">
    <property type="entry name" value="cyt_tran_rel"/>
    <property type="match status" value="1"/>
</dbReference>
<dbReference type="NCBIfam" id="TIGR00018">
    <property type="entry name" value="panC"/>
    <property type="match status" value="1"/>
</dbReference>
<dbReference type="PANTHER" id="PTHR21299">
    <property type="entry name" value="CYTIDYLATE KINASE/PANTOATE-BETA-ALANINE LIGASE"/>
    <property type="match status" value="1"/>
</dbReference>
<dbReference type="PANTHER" id="PTHR21299:SF1">
    <property type="entry name" value="PANTOATE--BETA-ALANINE LIGASE"/>
    <property type="match status" value="1"/>
</dbReference>
<dbReference type="Pfam" id="PF02569">
    <property type="entry name" value="Pantoate_ligase"/>
    <property type="match status" value="1"/>
</dbReference>
<dbReference type="SUPFAM" id="SSF52374">
    <property type="entry name" value="Nucleotidylyl transferase"/>
    <property type="match status" value="1"/>
</dbReference>
<keyword id="KW-0067">ATP-binding</keyword>
<keyword id="KW-0963">Cytoplasm</keyword>
<keyword id="KW-0436">Ligase</keyword>
<keyword id="KW-0547">Nucleotide-binding</keyword>
<keyword id="KW-0566">Pantothenate biosynthesis</keyword>
<keyword id="KW-1185">Reference proteome</keyword>